<organism>
    <name type="scientific">Neisseria meningitidis serogroup B (strain ATCC BAA-335 / MC58)</name>
    <dbReference type="NCBI Taxonomy" id="122586"/>
    <lineage>
        <taxon>Bacteria</taxon>
        <taxon>Pseudomonadati</taxon>
        <taxon>Pseudomonadota</taxon>
        <taxon>Betaproteobacteria</taxon>
        <taxon>Neisseriales</taxon>
        <taxon>Neisseriaceae</taxon>
        <taxon>Neisseria</taxon>
    </lineage>
</organism>
<feature type="chain" id="PRO_0000357868" description="NADH-quinone oxidoreductase subunit D">
    <location>
        <begin position="1"/>
        <end position="418"/>
    </location>
</feature>
<evidence type="ECO:0000255" key="1">
    <source>
        <dbReference type="HAMAP-Rule" id="MF_01358"/>
    </source>
</evidence>
<sequence length="418" mass="47710">MANKLRNYTINFGPQHPAAHGVLRMILELDGEQIVRADPHIGLLHRGTEKLAETKTYLQALPYMDRLDYVSMMVNEQAYCLAVEKLVGIDVPIRAQYIRVMFAEVTRILNHLMGIGSHAFDIGAMTAILYAFRDREELMDLYEAVSGARMHAAYFRPGGVYRDLPDFMPKYEGSKFRNAKVLKQLNESREGTMLDFIDAFCERFPKNIDTLETLLTDNRIWKQRTVGIGVVSPERAMQKGFTGVMLRGSGVEWDVRKTQPYEVYDKMDFDIPVGVNGDCYDRYLCRMEEMRQSVRIIKQCSEWLRVNPGPVITTNHKFAPPKRTEMKTGMEDLIHHFKLFTEGMHVPEGETYTAVEHPKGEFGVYIISDGANKPYRLKIRAPGFAHLQGMDEMAKGHMLADVVAIIGTQDIVFGEVDR</sequence>
<name>NUOD_NEIMB</name>
<accession>Q9K1C0</accession>
<protein>
    <recommendedName>
        <fullName evidence="1">NADH-quinone oxidoreductase subunit D</fullName>
        <ecNumber evidence="1">7.1.1.-</ecNumber>
    </recommendedName>
    <alternativeName>
        <fullName evidence="1">NADH dehydrogenase I subunit D</fullName>
    </alternativeName>
    <alternativeName>
        <fullName evidence="1">NDH-1 subunit D</fullName>
    </alternativeName>
</protein>
<gene>
    <name evidence="1" type="primary">nuoD</name>
    <name type="ordered locus">NMB0244</name>
</gene>
<proteinExistence type="inferred from homology"/>
<reference key="1">
    <citation type="journal article" date="2000" name="Science">
        <title>Complete genome sequence of Neisseria meningitidis serogroup B strain MC58.</title>
        <authorList>
            <person name="Tettelin H."/>
            <person name="Saunders N.J."/>
            <person name="Heidelberg J.F."/>
            <person name="Jeffries A.C."/>
            <person name="Nelson K.E."/>
            <person name="Eisen J.A."/>
            <person name="Ketchum K.A."/>
            <person name="Hood D.W."/>
            <person name="Peden J.F."/>
            <person name="Dodson R.J."/>
            <person name="Nelson W.C."/>
            <person name="Gwinn M.L."/>
            <person name="DeBoy R.T."/>
            <person name="Peterson J.D."/>
            <person name="Hickey E.K."/>
            <person name="Haft D.H."/>
            <person name="Salzberg S.L."/>
            <person name="White O."/>
            <person name="Fleischmann R.D."/>
            <person name="Dougherty B.A."/>
            <person name="Mason T.M."/>
            <person name="Ciecko A."/>
            <person name="Parksey D.S."/>
            <person name="Blair E."/>
            <person name="Cittone H."/>
            <person name="Clark E.B."/>
            <person name="Cotton M.D."/>
            <person name="Utterback T.R."/>
            <person name="Khouri H.M."/>
            <person name="Qin H."/>
            <person name="Vamathevan J.J."/>
            <person name="Gill J."/>
            <person name="Scarlato V."/>
            <person name="Masignani V."/>
            <person name="Pizza M."/>
            <person name="Grandi G."/>
            <person name="Sun L."/>
            <person name="Smith H.O."/>
            <person name="Fraser C.M."/>
            <person name="Moxon E.R."/>
            <person name="Rappuoli R."/>
            <person name="Venter J.C."/>
        </authorList>
    </citation>
    <scope>NUCLEOTIDE SEQUENCE [LARGE SCALE GENOMIC DNA]</scope>
    <source>
        <strain>ATCC BAA-335 / MC58</strain>
    </source>
</reference>
<comment type="function">
    <text evidence="1">NDH-1 shuttles electrons from NADH, via FMN and iron-sulfur (Fe-S) centers, to quinones in the respiratory chain. The immediate electron acceptor for the enzyme in this species is believed to be ubiquinone. Couples the redox reaction to proton translocation (for every two electrons transferred, four hydrogen ions are translocated across the cytoplasmic membrane), and thus conserves the redox energy in a proton gradient.</text>
</comment>
<comment type="catalytic activity">
    <reaction evidence="1">
        <text>a quinone + NADH + 5 H(+)(in) = a quinol + NAD(+) + 4 H(+)(out)</text>
        <dbReference type="Rhea" id="RHEA:57888"/>
        <dbReference type="ChEBI" id="CHEBI:15378"/>
        <dbReference type="ChEBI" id="CHEBI:24646"/>
        <dbReference type="ChEBI" id="CHEBI:57540"/>
        <dbReference type="ChEBI" id="CHEBI:57945"/>
        <dbReference type="ChEBI" id="CHEBI:132124"/>
    </reaction>
</comment>
<comment type="subunit">
    <text evidence="1">NDH-1 is composed of 14 different subunits. Subunits NuoB, C, D, E, F, and G constitute the peripheral sector of the complex.</text>
</comment>
<comment type="subcellular location">
    <subcellularLocation>
        <location evidence="1">Cell inner membrane</location>
        <topology evidence="1">Peripheral membrane protein</topology>
        <orientation evidence="1">Cytoplasmic side</orientation>
    </subcellularLocation>
</comment>
<comment type="similarity">
    <text evidence="1">Belongs to the complex I 49 kDa subunit family.</text>
</comment>
<dbReference type="EC" id="7.1.1.-" evidence="1"/>
<dbReference type="EMBL" id="AE002098">
    <property type="protein sequence ID" value="AAF40698.1"/>
    <property type="molecule type" value="Genomic_DNA"/>
</dbReference>
<dbReference type="PIR" id="B81222">
    <property type="entry name" value="B81222"/>
</dbReference>
<dbReference type="RefSeq" id="NP_273300.1">
    <property type="nucleotide sequence ID" value="NC_003112.2"/>
</dbReference>
<dbReference type="RefSeq" id="WP_002224828.1">
    <property type="nucleotide sequence ID" value="NC_003112.2"/>
</dbReference>
<dbReference type="SMR" id="Q9K1C0"/>
<dbReference type="FunCoup" id="Q9K1C0">
    <property type="interactions" value="336"/>
</dbReference>
<dbReference type="STRING" id="122586.NMB0244"/>
<dbReference type="PaxDb" id="122586-NMB0244"/>
<dbReference type="KEGG" id="nme:NMB0244"/>
<dbReference type="PATRIC" id="fig|122586.8.peg.306"/>
<dbReference type="HOGENOM" id="CLU_015134_1_1_4"/>
<dbReference type="InParanoid" id="Q9K1C0"/>
<dbReference type="OrthoDB" id="9801496at2"/>
<dbReference type="Proteomes" id="UP000000425">
    <property type="component" value="Chromosome"/>
</dbReference>
<dbReference type="GO" id="GO:0005886">
    <property type="term" value="C:plasma membrane"/>
    <property type="evidence" value="ECO:0007669"/>
    <property type="project" value="UniProtKB-SubCell"/>
</dbReference>
<dbReference type="GO" id="GO:0051287">
    <property type="term" value="F:NAD binding"/>
    <property type="evidence" value="ECO:0007669"/>
    <property type="project" value="InterPro"/>
</dbReference>
<dbReference type="GO" id="GO:0050136">
    <property type="term" value="F:NADH:ubiquinone reductase (non-electrogenic) activity"/>
    <property type="evidence" value="ECO:0007669"/>
    <property type="project" value="UniProtKB-UniRule"/>
</dbReference>
<dbReference type="GO" id="GO:0048038">
    <property type="term" value="F:quinone binding"/>
    <property type="evidence" value="ECO:0007669"/>
    <property type="project" value="UniProtKB-KW"/>
</dbReference>
<dbReference type="FunFam" id="1.10.645.10:FF:000005">
    <property type="entry name" value="NADH-quinone oxidoreductase subunit D"/>
    <property type="match status" value="1"/>
</dbReference>
<dbReference type="Gene3D" id="1.10.645.10">
    <property type="entry name" value="Cytochrome-c3 Hydrogenase, chain B"/>
    <property type="match status" value="1"/>
</dbReference>
<dbReference type="HAMAP" id="MF_01358">
    <property type="entry name" value="NDH1_NuoD"/>
    <property type="match status" value="1"/>
</dbReference>
<dbReference type="InterPro" id="IPR001135">
    <property type="entry name" value="NADH_Q_OxRdtase_suD"/>
</dbReference>
<dbReference type="InterPro" id="IPR014029">
    <property type="entry name" value="NADH_UbQ_OxRdtase_49kDa_CS"/>
</dbReference>
<dbReference type="InterPro" id="IPR022885">
    <property type="entry name" value="NDH1_su_D/H"/>
</dbReference>
<dbReference type="InterPro" id="IPR029014">
    <property type="entry name" value="NiFe-Hase_large"/>
</dbReference>
<dbReference type="NCBIfam" id="TIGR01962">
    <property type="entry name" value="NuoD"/>
    <property type="match status" value="1"/>
</dbReference>
<dbReference type="NCBIfam" id="NF004739">
    <property type="entry name" value="PRK06075.1"/>
    <property type="match status" value="1"/>
</dbReference>
<dbReference type="PANTHER" id="PTHR11993:SF10">
    <property type="entry name" value="NADH DEHYDROGENASE [UBIQUINONE] IRON-SULFUR PROTEIN 2, MITOCHONDRIAL"/>
    <property type="match status" value="1"/>
</dbReference>
<dbReference type="PANTHER" id="PTHR11993">
    <property type="entry name" value="NADH-UBIQUINONE OXIDOREDUCTASE 49 KDA SUBUNIT"/>
    <property type="match status" value="1"/>
</dbReference>
<dbReference type="Pfam" id="PF00346">
    <property type="entry name" value="Complex1_49kDa"/>
    <property type="match status" value="1"/>
</dbReference>
<dbReference type="SUPFAM" id="SSF56762">
    <property type="entry name" value="HydB/Nqo4-like"/>
    <property type="match status" value="1"/>
</dbReference>
<dbReference type="PROSITE" id="PS00535">
    <property type="entry name" value="COMPLEX1_49K"/>
    <property type="match status" value="1"/>
</dbReference>
<keyword id="KW-0997">Cell inner membrane</keyword>
<keyword id="KW-1003">Cell membrane</keyword>
<keyword id="KW-0472">Membrane</keyword>
<keyword id="KW-0520">NAD</keyword>
<keyword id="KW-0874">Quinone</keyword>
<keyword id="KW-1185">Reference proteome</keyword>
<keyword id="KW-1278">Translocase</keyword>
<keyword id="KW-0813">Transport</keyword>
<keyword id="KW-0830">Ubiquinone</keyword>